<evidence type="ECO:0000250" key="1"/>
<evidence type="ECO:0000255" key="2"/>
<evidence type="ECO:0000269" key="3">
    <source>
    </source>
</evidence>
<evidence type="ECO:0000305" key="4"/>
<protein>
    <recommendedName>
        <fullName>UDP-glucuronosyltransferase 3A1</fullName>
        <shortName>UDPGT 3A1</shortName>
        <ecNumber>2.4.1.17</ecNumber>
    </recommendedName>
</protein>
<accession>Q3UP75</accession>
<accession>Q8R0Y5</accession>
<proteinExistence type="evidence at protein level"/>
<dbReference type="EC" id="2.4.1.17"/>
<dbReference type="EMBL" id="AK143745">
    <property type="protein sequence ID" value="BAE25522.1"/>
    <property type="molecule type" value="mRNA"/>
</dbReference>
<dbReference type="EMBL" id="BC025940">
    <property type="protein sequence ID" value="AAH25940.1"/>
    <property type="molecule type" value="mRNA"/>
</dbReference>
<dbReference type="CCDS" id="CCDS27374.1"/>
<dbReference type="RefSeq" id="NP_997099.2">
    <property type="nucleotide sequence ID" value="NM_207216.2"/>
</dbReference>
<dbReference type="SMR" id="Q3UP75"/>
<dbReference type="FunCoup" id="Q3UP75">
    <property type="interactions" value="70"/>
</dbReference>
<dbReference type="STRING" id="10090.ENSMUSP00000022861"/>
<dbReference type="CAZy" id="GT1">
    <property type="family name" value="Glycosyltransferase Family 1"/>
</dbReference>
<dbReference type="GlyCosmos" id="Q3UP75">
    <property type="glycosylation" value="1 site, No reported glycans"/>
</dbReference>
<dbReference type="GlyGen" id="Q3UP75">
    <property type="glycosylation" value="1 site"/>
</dbReference>
<dbReference type="iPTMnet" id="Q3UP75"/>
<dbReference type="PhosphoSitePlus" id="Q3UP75"/>
<dbReference type="SwissPalm" id="Q3UP75"/>
<dbReference type="jPOST" id="Q3UP75"/>
<dbReference type="PaxDb" id="10090-ENSMUSP00000022861"/>
<dbReference type="PeptideAtlas" id="Q3UP75"/>
<dbReference type="ProteomicsDB" id="297802"/>
<dbReference type="DNASU" id="105887"/>
<dbReference type="Ensembl" id="ENSMUST00000022861.9">
    <property type="protein sequence ID" value="ENSMUSP00000022861.9"/>
    <property type="gene ID" value="ENSMUSG00000072664.12"/>
</dbReference>
<dbReference type="GeneID" id="105887"/>
<dbReference type="KEGG" id="mmu:105887"/>
<dbReference type="UCSC" id="uc007vfk.2">
    <property type="organism name" value="mouse"/>
</dbReference>
<dbReference type="AGR" id="MGI:2146055"/>
<dbReference type="CTD" id="167127"/>
<dbReference type="MGI" id="MGI:2146055">
    <property type="gene designation" value="Ugt3a1"/>
</dbReference>
<dbReference type="VEuPathDB" id="HostDB:ENSMUSG00000072664"/>
<dbReference type="eggNOG" id="KOG1192">
    <property type="taxonomic scope" value="Eukaryota"/>
</dbReference>
<dbReference type="GeneTree" id="ENSGT00940000161263"/>
<dbReference type="HOGENOM" id="CLU_012949_3_2_1"/>
<dbReference type="InParanoid" id="Q3UP75"/>
<dbReference type="OMA" id="HILLMQR"/>
<dbReference type="OrthoDB" id="5835829at2759"/>
<dbReference type="PhylomeDB" id="Q3UP75"/>
<dbReference type="TreeFam" id="TF315472"/>
<dbReference type="Reactome" id="R-MMU-156588">
    <property type="pathway name" value="Glucuronidation"/>
</dbReference>
<dbReference type="Reactome" id="R-MMU-9749641">
    <property type="pathway name" value="Aspirin ADME"/>
</dbReference>
<dbReference type="BioGRID-ORCS" id="105887">
    <property type="hits" value="1 hit in 79 CRISPR screens"/>
</dbReference>
<dbReference type="PRO" id="PR:Q3UP75"/>
<dbReference type="Proteomes" id="UP000000589">
    <property type="component" value="Chromosome 15"/>
</dbReference>
<dbReference type="RNAct" id="Q3UP75">
    <property type="molecule type" value="protein"/>
</dbReference>
<dbReference type="Bgee" id="ENSMUSG00000072664">
    <property type="expression patterns" value="Expressed in right kidney and 44 other cell types or tissues"/>
</dbReference>
<dbReference type="ExpressionAtlas" id="Q3UP75">
    <property type="expression patterns" value="baseline and differential"/>
</dbReference>
<dbReference type="GO" id="GO:0043541">
    <property type="term" value="C:UDP-N-acetylglucosamine transferase complex"/>
    <property type="evidence" value="ECO:0000266"/>
    <property type="project" value="MGI"/>
</dbReference>
<dbReference type="GO" id="GO:0015020">
    <property type="term" value="F:glucuronosyltransferase activity"/>
    <property type="evidence" value="ECO:0000266"/>
    <property type="project" value="MGI"/>
</dbReference>
<dbReference type="GO" id="GO:0008194">
    <property type="term" value="F:UDP-glycosyltransferase activity"/>
    <property type="evidence" value="ECO:0000314"/>
    <property type="project" value="MGI"/>
</dbReference>
<dbReference type="GO" id="GO:0071412">
    <property type="term" value="P:cellular response to genistein"/>
    <property type="evidence" value="ECO:0000266"/>
    <property type="project" value="MGI"/>
</dbReference>
<dbReference type="CDD" id="cd03784">
    <property type="entry name" value="GT1_Gtf-like"/>
    <property type="match status" value="1"/>
</dbReference>
<dbReference type="FunFam" id="3.40.50.2000:FF:000094">
    <property type="entry name" value="UDP-glucuronosyltransferase"/>
    <property type="match status" value="1"/>
</dbReference>
<dbReference type="FunFam" id="3.40.50.2000:FF:000155">
    <property type="entry name" value="UDP-glucuronosyltransferase"/>
    <property type="match status" value="1"/>
</dbReference>
<dbReference type="Gene3D" id="3.40.50.2000">
    <property type="entry name" value="Glycogen Phosphorylase B"/>
    <property type="match status" value="2"/>
</dbReference>
<dbReference type="InterPro" id="IPR050271">
    <property type="entry name" value="UDP-glycosyltransferase"/>
</dbReference>
<dbReference type="InterPro" id="IPR002213">
    <property type="entry name" value="UDP_glucos_trans"/>
</dbReference>
<dbReference type="InterPro" id="IPR035595">
    <property type="entry name" value="UDP_glycos_trans_CS"/>
</dbReference>
<dbReference type="PANTHER" id="PTHR48043">
    <property type="entry name" value="EG:EG0003.4 PROTEIN-RELATED"/>
    <property type="match status" value="1"/>
</dbReference>
<dbReference type="PANTHER" id="PTHR48043:SF24">
    <property type="entry name" value="UDP-GLUCURONOSYLTRANSFERASE 3A2"/>
    <property type="match status" value="1"/>
</dbReference>
<dbReference type="Pfam" id="PF00201">
    <property type="entry name" value="UDPGT"/>
    <property type="match status" value="1"/>
</dbReference>
<dbReference type="SUPFAM" id="SSF53756">
    <property type="entry name" value="UDP-Glycosyltransferase/glycogen phosphorylase"/>
    <property type="match status" value="1"/>
</dbReference>
<dbReference type="PROSITE" id="PS00375">
    <property type="entry name" value="UDPGT"/>
    <property type="match status" value="1"/>
</dbReference>
<sequence length="523" mass="59698">MAAHRSWLLVSFFLLEVLLLEAAKILTISTLSASHYILMNRVSQILQGGGHDVIKLLYEGGDIPDFRKENSSYQVINWRLPEDQQKTFENRWHRLIDEYAYGRSKYHTLLKIHQYFADLCSHLLSRKDIMELLQKENFDLVLLDSMDLCSFLIVEKLGKRFVSFLPFQFSYMDFGLPNAPLSYAPVYGSGLTDQMDFWGRVKNILMFFHFTKKRRDIFSQYGNTVQEHFAEGSQPVLSDLLLKAELWFVNSDFALDFARPLFPNTVYVGGLLDKPVQPIPQDLEDFISQFGDSGFVLVALGSVVSMIQSKEIIKEMNSAFAHLPQGVLWTCKSSHWPKDVSLAPNVKIMDWLPQIDLLAHPSIRLFVTHGGMNSVMEAVHHGVPMVGIPFFGDQPENMVRVEAKNLGVSIQLQTLKAESFLLTMKEVIEDQRYKTAAMASKVIRQSHPLTPAQRLVGWIDHILQTGGAAHLKPYAFQQPWHEQYMLDVFLFLLGLTLGTLWLSVKVLVAVTRYLSISRKVKQA</sequence>
<gene>
    <name type="primary">Ugt3a1</name>
</gene>
<comment type="function">
    <text evidence="1">UDP-glucuronosyltransferases catalyze phase II biotransformation reactions in which lipophilic substrates are conjugated with glucuronic acid to increase water solubility and enhance excretion. They are of major importance in the conjugation and subsequent elimination of potentially toxic xenobiotics and endogenous compounds (By similarity).</text>
</comment>
<comment type="catalytic activity">
    <reaction>
        <text>glucuronate acceptor + UDP-alpha-D-glucuronate = acceptor beta-D-glucuronoside + UDP + H(+)</text>
        <dbReference type="Rhea" id="RHEA:21032"/>
        <dbReference type="ChEBI" id="CHEBI:15378"/>
        <dbReference type="ChEBI" id="CHEBI:58052"/>
        <dbReference type="ChEBI" id="CHEBI:58223"/>
        <dbReference type="ChEBI" id="CHEBI:132367"/>
        <dbReference type="ChEBI" id="CHEBI:132368"/>
        <dbReference type="EC" id="2.4.1.17"/>
    </reaction>
</comment>
<comment type="subcellular location">
    <subcellularLocation>
        <location evidence="4">Membrane</location>
        <topology evidence="4">Single-pass type I membrane protein</topology>
    </subcellularLocation>
</comment>
<comment type="tissue specificity">
    <text evidence="3">Highly expressed in kidney, while it is expressed at low levels in liver. Not detected in other tissues examined.</text>
</comment>
<comment type="similarity">
    <text evidence="4">Belongs to the UDP-glycosyltransferase family.</text>
</comment>
<organism>
    <name type="scientific">Mus musculus</name>
    <name type="common">Mouse</name>
    <dbReference type="NCBI Taxonomy" id="10090"/>
    <lineage>
        <taxon>Eukaryota</taxon>
        <taxon>Metazoa</taxon>
        <taxon>Chordata</taxon>
        <taxon>Craniata</taxon>
        <taxon>Vertebrata</taxon>
        <taxon>Euteleostomi</taxon>
        <taxon>Mammalia</taxon>
        <taxon>Eutheria</taxon>
        <taxon>Euarchontoglires</taxon>
        <taxon>Glires</taxon>
        <taxon>Rodentia</taxon>
        <taxon>Myomorpha</taxon>
        <taxon>Muroidea</taxon>
        <taxon>Muridae</taxon>
        <taxon>Murinae</taxon>
        <taxon>Mus</taxon>
        <taxon>Mus</taxon>
    </lineage>
</organism>
<reference key="1">
    <citation type="journal article" date="2005" name="Science">
        <title>The transcriptional landscape of the mammalian genome.</title>
        <authorList>
            <person name="Carninci P."/>
            <person name="Kasukawa T."/>
            <person name="Katayama S."/>
            <person name="Gough J."/>
            <person name="Frith M.C."/>
            <person name="Maeda N."/>
            <person name="Oyama R."/>
            <person name="Ravasi T."/>
            <person name="Lenhard B."/>
            <person name="Wells C."/>
            <person name="Kodzius R."/>
            <person name="Shimokawa K."/>
            <person name="Bajic V.B."/>
            <person name="Brenner S.E."/>
            <person name="Batalov S."/>
            <person name="Forrest A.R."/>
            <person name="Zavolan M."/>
            <person name="Davis M.J."/>
            <person name="Wilming L.G."/>
            <person name="Aidinis V."/>
            <person name="Allen J.E."/>
            <person name="Ambesi-Impiombato A."/>
            <person name="Apweiler R."/>
            <person name="Aturaliya R.N."/>
            <person name="Bailey T.L."/>
            <person name="Bansal M."/>
            <person name="Baxter L."/>
            <person name="Beisel K.W."/>
            <person name="Bersano T."/>
            <person name="Bono H."/>
            <person name="Chalk A.M."/>
            <person name="Chiu K.P."/>
            <person name="Choudhary V."/>
            <person name="Christoffels A."/>
            <person name="Clutterbuck D.R."/>
            <person name="Crowe M.L."/>
            <person name="Dalla E."/>
            <person name="Dalrymple B.P."/>
            <person name="de Bono B."/>
            <person name="Della Gatta G."/>
            <person name="di Bernardo D."/>
            <person name="Down T."/>
            <person name="Engstrom P."/>
            <person name="Fagiolini M."/>
            <person name="Faulkner G."/>
            <person name="Fletcher C.F."/>
            <person name="Fukushima T."/>
            <person name="Furuno M."/>
            <person name="Futaki S."/>
            <person name="Gariboldi M."/>
            <person name="Georgii-Hemming P."/>
            <person name="Gingeras T.R."/>
            <person name="Gojobori T."/>
            <person name="Green R.E."/>
            <person name="Gustincich S."/>
            <person name="Harbers M."/>
            <person name="Hayashi Y."/>
            <person name="Hensch T.K."/>
            <person name="Hirokawa N."/>
            <person name="Hill D."/>
            <person name="Huminiecki L."/>
            <person name="Iacono M."/>
            <person name="Ikeo K."/>
            <person name="Iwama A."/>
            <person name="Ishikawa T."/>
            <person name="Jakt M."/>
            <person name="Kanapin A."/>
            <person name="Katoh M."/>
            <person name="Kawasawa Y."/>
            <person name="Kelso J."/>
            <person name="Kitamura H."/>
            <person name="Kitano H."/>
            <person name="Kollias G."/>
            <person name="Krishnan S.P."/>
            <person name="Kruger A."/>
            <person name="Kummerfeld S.K."/>
            <person name="Kurochkin I.V."/>
            <person name="Lareau L.F."/>
            <person name="Lazarevic D."/>
            <person name="Lipovich L."/>
            <person name="Liu J."/>
            <person name="Liuni S."/>
            <person name="McWilliam S."/>
            <person name="Madan Babu M."/>
            <person name="Madera M."/>
            <person name="Marchionni L."/>
            <person name="Matsuda H."/>
            <person name="Matsuzawa S."/>
            <person name="Miki H."/>
            <person name="Mignone F."/>
            <person name="Miyake S."/>
            <person name="Morris K."/>
            <person name="Mottagui-Tabar S."/>
            <person name="Mulder N."/>
            <person name="Nakano N."/>
            <person name="Nakauchi H."/>
            <person name="Ng P."/>
            <person name="Nilsson R."/>
            <person name="Nishiguchi S."/>
            <person name="Nishikawa S."/>
            <person name="Nori F."/>
            <person name="Ohara O."/>
            <person name="Okazaki Y."/>
            <person name="Orlando V."/>
            <person name="Pang K.C."/>
            <person name="Pavan W.J."/>
            <person name="Pavesi G."/>
            <person name="Pesole G."/>
            <person name="Petrovsky N."/>
            <person name="Piazza S."/>
            <person name="Reed J."/>
            <person name="Reid J.F."/>
            <person name="Ring B.Z."/>
            <person name="Ringwald M."/>
            <person name="Rost B."/>
            <person name="Ruan Y."/>
            <person name="Salzberg S.L."/>
            <person name="Sandelin A."/>
            <person name="Schneider C."/>
            <person name="Schoenbach C."/>
            <person name="Sekiguchi K."/>
            <person name="Semple C.A."/>
            <person name="Seno S."/>
            <person name="Sessa L."/>
            <person name="Sheng Y."/>
            <person name="Shibata Y."/>
            <person name="Shimada H."/>
            <person name="Shimada K."/>
            <person name="Silva D."/>
            <person name="Sinclair B."/>
            <person name="Sperling S."/>
            <person name="Stupka E."/>
            <person name="Sugiura K."/>
            <person name="Sultana R."/>
            <person name="Takenaka Y."/>
            <person name="Taki K."/>
            <person name="Tammoja K."/>
            <person name="Tan S.L."/>
            <person name="Tang S."/>
            <person name="Taylor M.S."/>
            <person name="Tegner J."/>
            <person name="Teichmann S.A."/>
            <person name="Ueda H.R."/>
            <person name="van Nimwegen E."/>
            <person name="Verardo R."/>
            <person name="Wei C.L."/>
            <person name="Yagi K."/>
            <person name="Yamanishi H."/>
            <person name="Zabarovsky E."/>
            <person name="Zhu S."/>
            <person name="Zimmer A."/>
            <person name="Hide W."/>
            <person name="Bult C."/>
            <person name="Grimmond S.M."/>
            <person name="Teasdale R.D."/>
            <person name="Liu E.T."/>
            <person name="Brusic V."/>
            <person name="Quackenbush J."/>
            <person name="Wahlestedt C."/>
            <person name="Mattick J.S."/>
            <person name="Hume D.A."/>
            <person name="Kai C."/>
            <person name="Sasaki D."/>
            <person name="Tomaru Y."/>
            <person name="Fukuda S."/>
            <person name="Kanamori-Katayama M."/>
            <person name="Suzuki M."/>
            <person name="Aoki J."/>
            <person name="Arakawa T."/>
            <person name="Iida J."/>
            <person name="Imamura K."/>
            <person name="Itoh M."/>
            <person name="Kato T."/>
            <person name="Kawaji H."/>
            <person name="Kawagashira N."/>
            <person name="Kawashima T."/>
            <person name="Kojima M."/>
            <person name="Kondo S."/>
            <person name="Konno H."/>
            <person name="Nakano K."/>
            <person name="Ninomiya N."/>
            <person name="Nishio T."/>
            <person name="Okada M."/>
            <person name="Plessy C."/>
            <person name="Shibata K."/>
            <person name="Shiraki T."/>
            <person name="Suzuki S."/>
            <person name="Tagami M."/>
            <person name="Waki K."/>
            <person name="Watahiki A."/>
            <person name="Okamura-Oho Y."/>
            <person name="Suzuki H."/>
            <person name="Kawai J."/>
            <person name="Hayashizaki Y."/>
        </authorList>
    </citation>
    <scope>NUCLEOTIDE SEQUENCE [LARGE SCALE MRNA]</scope>
    <source>
        <strain>C57BL/6J</strain>
        <tissue>Spleen</tissue>
    </source>
</reference>
<reference key="2">
    <citation type="journal article" date="2004" name="Genome Res.">
        <title>The status, quality, and expansion of the NIH full-length cDNA project: the Mammalian Gene Collection (MGC).</title>
        <authorList>
            <consortium name="The MGC Project Team"/>
        </authorList>
    </citation>
    <scope>NUCLEOTIDE SEQUENCE [LARGE SCALE MRNA]</scope>
    <source>
        <strain>FVB/N</strain>
        <tissue>Liver</tissue>
    </source>
</reference>
<reference key="3">
    <citation type="journal article" date="2007" name="Drug Metab. Dispos.">
        <title>Tissue- and gender-specific mRNA expression of UDP-glucuronosyltransferases (UGTs) in mice.</title>
        <authorList>
            <person name="Buckley D.B."/>
            <person name="Klaassen C.D."/>
        </authorList>
    </citation>
    <scope>TISSUE SPECIFICITY</scope>
</reference>
<reference key="4">
    <citation type="journal article" date="2010" name="Cell">
        <title>A tissue-specific atlas of mouse protein phosphorylation and expression.</title>
        <authorList>
            <person name="Huttlin E.L."/>
            <person name="Jedrychowski M.P."/>
            <person name="Elias J.E."/>
            <person name="Goswami T."/>
            <person name="Rad R."/>
            <person name="Beausoleil S.A."/>
            <person name="Villen J."/>
            <person name="Haas W."/>
            <person name="Sowa M.E."/>
            <person name="Gygi S.P."/>
        </authorList>
    </citation>
    <scope>IDENTIFICATION BY MASS SPECTROMETRY [LARGE SCALE ANALYSIS]</scope>
    <source>
        <tissue>Kidney</tissue>
    </source>
</reference>
<keyword id="KW-0325">Glycoprotein</keyword>
<keyword id="KW-0328">Glycosyltransferase</keyword>
<keyword id="KW-0472">Membrane</keyword>
<keyword id="KW-1185">Reference proteome</keyword>
<keyword id="KW-0732">Signal</keyword>
<keyword id="KW-0808">Transferase</keyword>
<keyword id="KW-0812">Transmembrane</keyword>
<keyword id="KW-1133">Transmembrane helix</keyword>
<feature type="signal peptide" evidence="2">
    <location>
        <begin position="1"/>
        <end position="22"/>
    </location>
</feature>
<feature type="chain" id="PRO_0000299151" description="UDP-glucuronosyltransferase 3A1">
    <location>
        <begin position="23"/>
        <end position="523"/>
    </location>
</feature>
<feature type="topological domain" description="Extracellular" evidence="2">
    <location>
        <begin position="23"/>
        <end position="487"/>
    </location>
</feature>
<feature type="transmembrane region" description="Helical" evidence="2">
    <location>
        <begin position="488"/>
        <end position="508"/>
    </location>
</feature>
<feature type="topological domain" description="Cytoplasmic" evidence="2">
    <location>
        <begin position="509"/>
        <end position="523"/>
    </location>
</feature>
<feature type="glycosylation site" description="N-linked (GlcNAc...) asparagine" evidence="2">
    <location>
        <position position="70"/>
    </location>
</feature>
<feature type="sequence conflict" description="In Ref. 2; AAH25940." evidence="4" ref="2">
    <original>G</original>
    <variation>D</variation>
    <location>
        <position position="301"/>
    </location>
</feature>
<feature type="sequence conflict" description="In Ref. 2; AAH25940." evidence="4" ref="2">
    <original>Q</original>
    <variation>N</variation>
    <location>
        <position position="445"/>
    </location>
</feature>
<name>UD3A1_MOUSE</name>